<evidence type="ECO:0000250" key="1"/>
<evidence type="ECO:0000255" key="2"/>
<evidence type="ECO:0000256" key="3">
    <source>
        <dbReference type="SAM" id="MobiDB-lite"/>
    </source>
</evidence>
<evidence type="ECO:0000305" key="4"/>
<gene>
    <name type="primary">BFR2</name>
    <name type="ORF">FGRRES_08381</name>
    <name type="ORF">FGSG_08381</name>
</gene>
<name>BFR2_GIBZE</name>
<protein>
    <recommendedName>
        <fullName>Protein BFR2</fullName>
    </recommendedName>
</protein>
<keyword id="KW-0175">Coiled coil</keyword>
<keyword id="KW-0539">Nucleus</keyword>
<keyword id="KW-1185">Reference proteome</keyword>
<feature type="chain" id="PRO_0000056628" description="Protein BFR2">
    <location>
        <begin position="1"/>
        <end position="538"/>
    </location>
</feature>
<feature type="region of interest" description="Disordered" evidence="3">
    <location>
        <begin position="1"/>
        <end position="239"/>
    </location>
</feature>
<feature type="coiled-coil region" evidence="2">
    <location>
        <begin position="290"/>
        <end position="363"/>
    </location>
</feature>
<feature type="compositionally biased region" description="Basic and acidic residues" evidence="3">
    <location>
        <begin position="7"/>
        <end position="23"/>
    </location>
</feature>
<feature type="compositionally biased region" description="Acidic residues" evidence="3">
    <location>
        <begin position="80"/>
        <end position="105"/>
    </location>
</feature>
<feature type="compositionally biased region" description="Acidic residues" evidence="3">
    <location>
        <begin position="172"/>
        <end position="222"/>
    </location>
</feature>
<sequence length="538" mass="59594">MVKAKGRAKEFQDPDEPITKDYDPEADVDVSEHGSGSEDSEDENAGTEHYVSVGKSKLRKSEGLSLGPQYRGSRVSRDALEEESASEEDDEEGSGDEEFDDPETADLERDAAEANDSEISSDNALGESDEERFKDYTFRASSKPNKPLSKRAKAADYMSSSDNEGAELGGSDSEDEEMDDGLDALVDGEGDSDDESDENDDEEGSGDDEEDDEDDSESDEEDSKAKAQNAKPMMAALSTQPDVDKGLAIRQQRKAYDGLLNMRIRLQKALIAANTFEALDSNPEPESEPYEAAEEAAIKLLNTISSLKDNFGPSHAGEKRKRELDVSMTTSQIWEQMQAEEERAIKSREDRLEKWSRKVQSVNVTGPKGLEGRNKTLISALRDQLINPDNRLAKRSRVPRSCAPAQAAKGVSEDNNIYDDADFYQVLLKELVDQRTVEGSSGAGAGDAVPTVVLTASKDVKNRKNVDRKASKGRKMRFTVHEKMQNFMAPEDRRAWEQGAIDRFFGTLFGRKMQLNEDESDDDMDVDVEEAGLRLFRN</sequence>
<reference key="1">
    <citation type="journal article" date="2007" name="Science">
        <title>The Fusarium graminearum genome reveals a link between localized polymorphism and pathogen specialization.</title>
        <authorList>
            <person name="Cuomo C.A."/>
            <person name="Gueldener U."/>
            <person name="Xu J.-R."/>
            <person name="Trail F."/>
            <person name="Turgeon B.G."/>
            <person name="Di Pietro A."/>
            <person name="Walton J.D."/>
            <person name="Ma L.-J."/>
            <person name="Baker S.E."/>
            <person name="Rep M."/>
            <person name="Adam G."/>
            <person name="Antoniw J."/>
            <person name="Baldwin T."/>
            <person name="Calvo S.E."/>
            <person name="Chang Y.-L."/>
            <person name="DeCaprio D."/>
            <person name="Gale L.R."/>
            <person name="Gnerre S."/>
            <person name="Goswami R.S."/>
            <person name="Hammond-Kosack K."/>
            <person name="Harris L.J."/>
            <person name="Hilburn K."/>
            <person name="Kennell J.C."/>
            <person name="Kroken S."/>
            <person name="Magnuson J.K."/>
            <person name="Mannhaupt G."/>
            <person name="Mauceli E.W."/>
            <person name="Mewes H.-W."/>
            <person name="Mitterbauer R."/>
            <person name="Muehlbauer G."/>
            <person name="Muensterkoetter M."/>
            <person name="Nelson D."/>
            <person name="O'Donnell K."/>
            <person name="Ouellet T."/>
            <person name="Qi W."/>
            <person name="Quesneville H."/>
            <person name="Roncero M.I.G."/>
            <person name="Seong K.-Y."/>
            <person name="Tetko I.V."/>
            <person name="Urban M."/>
            <person name="Waalwijk C."/>
            <person name="Ward T.J."/>
            <person name="Yao J."/>
            <person name="Birren B.W."/>
            <person name="Kistler H.C."/>
        </authorList>
    </citation>
    <scope>NUCLEOTIDE SEQUENCE [LARGE SCALE GENOMIC DNA]</scope>
    <source>
        <strain>ATCC MYA-4620 / CBS 123657 / FGSC 9075 / NRRL 31084 / PH-1</strain>
    </source>
</reference>
<reference key="2">
    <citation type="journal article" date="2010" name="Nature">
        <title>Comparative genomics reveals mobile pathogenicity chromosomes in Fusarium.</title>
        <authorList>
            <person name="Ma L.-J."/>
            <person name="van der Does H.C."/>
            <person name="Borkovich K.A."/>
            <person name="Coleman J.J."/>
            <person name="Daboussi M.-J."/>
            <person name="Di Pietro A."/>
            <person name="Dufresne M."/>
            <person name="Freitag M."/>
            <person name="Grabherr M."/>
            <person name="Henrissat B."/>
            <person name="Houterman P.M."/>
            <person name="Kang S."/>
            <person name="Shim W.-B."/>
            <person name="Woloshuk C."/>
            <person name="Xie X."/>
            <person name="Xu J.-R."/>
            <person name="Antoniw J."/>
            <person name="Baker S.E."/>
            <person name="Bluhm B.H."/>
            <person name="Breakspear A."/>
            <person name="Brown D.W."/>
            <person name="Butchko R.A.E."/>
            <person name="Chapman S."/>
            <person name="Coulson R."/>
            <person name="Coutinho P.M."/>
            <person name="Danchin E.G.J."/>
            <person name="Diener A."/>
            <person name="Gale L.R."/>
            <person name="Gardiner D.M."/>
            <person name="Goff S."/>
            <person name="Hammond-Kosack K.E."/>
            <person name="Hilburn K."/>
            <person name="Hua-Van A."/>
            <person name="Jonkers W."/>
            <person name="Kazan K."/>
            <person name="Kodira C.D."/>
            <person name="Koehrsen M."/>
            <person name="Kumar L."/>
            <person name="Lee Y.-H."/>
            <person name="Li L."/>
            <person name="Manners J.M."/>
            <person name="Miranda-Saavedra D."/>
            <person name="Mukherjee M."/>
            <person name="Park G."/>
            <person name="Park J."/>
            <person name="Park S.-Y."/>
            <person name="Proctor R.H."/>
            <person name="Regev A."/>
            <person name="Ruiz-Roldan M.C."/>
            <person name="Sain D."/>
            <person name="Sakthikumar S."/>
            <person name="Sykes S."/>
            <person name="Schwartz D.C."/>
            <person name="Turgeon B.G."/>
            <person name="Wapinski I."/>
            <person name="Yoder O."/>
            <person name="Young S."/>
            <person name="Zeng Q."/>
            <person name="Zhou S."/>
            <person name="Galagan J."/>
            <person name="Cuomo C.A."/>
            <person name="Kistler H.C."/>
            <person name="Rep M."/>
        </authorList>
    </citation>
    <scope>GENOME REANNOTATION</scope>
    <source>
        <strain>ATCC MYA-4620 / CBS 123657 / FGSC 9075 / NRRL 31084 / PH-1</strain>
    </source>
</reference>
<reference key="3">
    <citation type="journal article" date="2015" name="BMC Genomics">
        <title>The completed genome sequence of the pathogenic ascomycete fungus Fusarium graminearum.</title>
        <authorList>
            <person name="King R."/>
            <person name="Urban M."/>
            <person name="Hammond-Kosack M.C.U."/>
            <person name="Hassani-Pak K."/>
            <person name="Hammond-Kosack K.E."/>
        </authorList>
    </citation>
    <scope>NUCLEOTIDE SEQUENCE [LARGE SCALE GENOMIC DNA]</scope>
    <source>
        <strain>ATCC MYA-4620 / CBS 123657 / FGSC 9075 / NRRL 31084 / PH-1</strain>
    </source>
</reference>
<comment type="subcellular location">
    <subcellularLocation>
        <location evidence="1">Nucleus</location>
        <location evidence="1">Nucleolus</location>
    </subcellularLocation>
</comment>
<comment type="similarity">
    <text evidence="4">Belongs to the AATF family.</text>
</comment>
<organism>
    <name type="scientific">Gibberella zeae (strain ATCC MYA-4620 / CBS 123657 / FGSC 9075 / NRRL 31084 / PH-1)</name>
    <name type="common">Wheat head blight fungus</name>
    <name type="synonym">Fusarium graminearum</name>
    <dbReference type="NCBI Taxonomy" id="229533"/>
    <lineage>
        <taxon>Eukaryota</taxon>
        <taxon>Fungi</taxon>
        <taxon>Dikarya</taxon>
        <taxon>Ascomycota</taxon>
        <taxon>Pezizomycotina</taxon>
        <taxon>Sordariomycetes</taxon>
        <taxon>Hypocreomycetidae</taxon>
        <taxon>Hypocreales</taxon>
        <taxon>Nectriaceae</taxon>
        <taxon>Fusarium</taxon>
    </lineage>
</organism>
<proteinExistence type="inferred from homology"/>
<accession>Q4I327</accession>
<accession>A0A098DE39</accession>
<accession>A0A0E0RZN7</accession>
<accession>V6RKI1</accession>
<dbReference type="EMBL" id="DS231667">
    <property type="protein sequence ID" value="ESU14971.1"/>
    <property type="molecule type" value="Genomic_DNA"/>
</dbReference>
<dbReference type="EMBL" id="HG970333">
    <property type="protein sequence ID" value="CEF76712.1"/>
    <property type="molecule type" value="Genomic_DNA"/>
</dbReference>
<dbReference type="RefSeq" id="XP_011320396.1">
    <property type="nucleotide sequence ID" value="XM_011322094.1"/>
</dbReference>
<dbReference type="SMR" id="Q4I327"/>
<dbReference type="FunCoup" id="Q4I327">
    <property type="interactions" value="913"/>
</dbReference>
<dbReference type="STRING" id="229533.Q4I327"/>
<dbReference type="GeneID" id="23555389"/>
<dbReference type="KEGG" id="fgr:FGSG_08381"/>
<dbReference type="VEuPathDB" id="FungiDB:FGRAMPH1_01G09819"/>
<dbReference type="eggNOG" id="KOG2773">
    <property type="taxonomic scope" value="Eukaryota"/>
</dbReference>
<dbReference type="HOGENOM" id="CLU_018299_2_0_1"/>
<dbReference type="InParanoid" id="Q4I327"/>
<dbReference type="OrthoDB" id="137295at110618"/>
<dbReference type="Proteomes" id="UP000070720">
    <property type="component" value="Chromosome 2"/>
</dbReference>
<dbReference type="GO" id="GO:0005730">
    <property type="term" value="C:nucleolus"/>
    <property type="evidence" value="ECO:0007669"/>
    <property type="project" value="UniProtKB-SubCell"/>
</dbReference>
<dbReference type="GO" id="GO:0000462">
    <property type="term" value="P:maturation of SSU-rRNA from tricistronic rRNA transcript (SSU-rRNA, 5.8S rRNA, LSU-rRNA)"/>
    <property type="evidence" value="ECO:0007669"/>
    <property type="project" value="TreeGrafter"/>
</dbReference>
<dbReference type="InterPro" id="IPR025160">
    <property type="entry name" value="AATF"/>
</dbReference>
<dbReference type="InterPro" id="IPR039223">
    <property type="entry name" value="AATF/Bfr2"/>
</dbReference>
<dbReference type="InterPro" id="IPR012617">
    <property type="entry name" value="AATF_C"/>
</dbReference>
<dbReference type="PANTHER" id="PTHR15565">
    <property type="entry name" value="AATF PROTEIN APOPTOSIS ANTAGONIZING TRANSCRIPTION FACTOR"/>
    <property type="match status" value="1"/>
</dbReference>
<dbReference type="PANTHER" id="PTHR15565:SF0">
    <property type="entry name" value="PROTEIN AATF"/>
    <property type="match status" value="1"/>
</dbReference>
<dbReference type="Pfam" id="PF13339">
    <property type="entry name" value="AATF-Che1"/>
    <property type="match status" value="1"/>
</dbReference>
<dbReference type="Pfam" id="PF08164">
    <property type="entry name" value="TRAUB"/>
    <property type="match status" value="1"/>
</dbReference>